<proteinExistence type="evidence at protein level"/>
<accession>P9WPL5</accession>
<accession>D0EW73</accession>
<accession>F2GEM8</accession>
<accession>O53563</accession>
<sequence>MTEAPDVDLADGNFYASREARAAYRWMRANQPVFRDRNGLAAASTYQAVIDAERQPELFSNAGGIRPDQPALPMMIDMDDPAHLLRRKLVNAGFTRKRVKDKEASIAALCDTLIDAVCERGECDFVRDLAAPLPMAVIGDMLGVRPEQRDMFLRWSDDLVTFLSSHVSQEDFQITMDAFAAYNDFTRATIAARRADPTDDLVSVLVSSEVDGERLSDDELVMETLLILIGGDETTRHTLSGGTEQLLRNRDQWDLLQRDPSLLPGAIEEMLRWTAPVKNMCRVLTADTEFHGTALCAGEKMMLLFESANFDEAVFCEPEKFDVQRNPNSHLAFGFGTHFCLGNQLARLELSLMTERVLRRLPDLRLVADDSVLPLRPANFVSGLESMPVVFTPSPPLG</sequence>
<gene>
    <name type="primary">cyp142</name>
    <name evidence="4" type="synonym">cyp142A1</name>
    <name type="ordered locus">Rv3518c</name>
    <name type="ORF">MTV023.25c</name>
</gene>
<name>CP142_MYCTU</name>
<feature type="chain" id="PRO_0000052304" description="Steroid C26-monooxygenase">
    <location>
        <begin position="1"/>
        <end position="398"/>
    </location>
</feature>
<feature type="binding site" description="axial binding residue" evidence="2 9">
    <location>
        <position position="340"/>
    </location>
    <ligand>
        <name>heme</name>
        <dbReference type="ChEBI" id="CHEBI:30413"/>
    </ligand>
    <ligandPart>
        <name>Fe</name>
        <dbReference type="ChEBI" id="CHEBI:18248"/>
    </ligandPart>
</feature>
<feature type="helix" evidence="10">
    <location>
        <begin position="12"/>
        <end position="16"/>
    </location>
</feature>
<feature type="helix" evidence="10">
    <location>
        <begin position="20"/>
        <end position="30"/>
    </location>
</feature>
<feature type="strand" evidence="10">
    <location>
        <begin position="32"/>
        <end position="35"/>
    </location>
</feature>
<feature type="strand" evidence="10">
    <location>
        <begin position="41"/>
        <end position="43"/>
    </location>
</feature>
<feature type="helix" evidence="10">
    <location>
        <begin position="46"/>
        <end position="53"/>
    </location>
</feature>
<feature type="turn" evidence="10">
    <location>
        <begin position="56"/>
        <end position="58"/>
    </location>
</feature>
<feature type="strand" evidence="10">
    <location>
        <begin position="59"/>
        <end position="61"/>
    </location>
</feature>
<feature type="helix" evidence="10">
    <location>
        <begin position="75"/>
        <end position="77"/>
    </location>
</feature>
<feature type="helix" evidence="10">
    <location>
        <begin position="82"/>
        <end position="91"/>
    </location>
</feature>
<feature type="helix" evidence="11">
    <location>
        <begin position="92"/>
        <end position="94"/>
    </location>
</feature>
<feature type="helix" evidence="10">
    <location>
        <begin position="96"/>
        <end position="100"/>
    </location>
</feature>
<feature type="helix" evidence="10">
    <location>
        <begin position="103"/>
        <end position="117"/>
    </location>
</feature>
<feature type="turn" evidence="10">
    <location>
        <begin position="118"/>
        <end position="120"/>
    </location>
</feature>
<feature type="strand" evidence="10">
    <location>
        <begin position="121"/>
        <end position="124"/>
    </location>
</feature>
<feature type="helix" evidence="10">
    <location>
        <begin position="125"/>
        <end position="128"/>
    </location>
</feature>
<feature type="turn" evidence="10">
    <location>
        <begin position="129"/>
        <end position="131"/>
    </location>
</feature>
<feature type="helix" evidence="10">
    <location>
        <begin position="132"/>
        <end position="141"/>
    </location>
</feature>
<feature type="helix" evidence="10">
    <location>
        <begin position="146"/>
        <end position="148"/>
    </location>
</feature>
<feature type="helix" evidence="10">
    <location>
        <begin position="149"/>
        <end position="163"/>
    </location>
</feature>
<feature type="helix" evidence="10">
    <location>
        <begin position="169"/>
        <end position="195"/>
    </location>
</feature>
<feature type="helix" evidence="10">
    <location>
        <begin position="201"/>
        <end position="207"/>
    </location>
</feature>
<feature type="helix" evidence="10">
    <location>
        <begin position="217"/>
        <end position="233"/>
    </location>
</feature>
<feature type="helix" evidence="10">
    <location>
        <begin position="235"/>
        <end position="248"/>
    </location>
</feature>
<feature type="helix" evidence="10">
    <location>
        <begin position="250"/>
        <end position="258"/>
    </location>
</feature>
<feature type="helix" evidence="10">
    <location>
        <begin position="260"/>
        <end position="262"/>
    </location>
</feature>
<feature type="helix" evidence="10">
    <location>
        <begin position="263"/>
        <end position="274"/>
    </location>
</feature>
<feature type="strand" evidence="10">
    <location>
        <begin position="279"/>
        <end position="286"/>
    </location>
</feature>
<feature type="strand" evidence="10">
    <location>
        <begin position="288"/>
        <end position="290"/>
    </location>
</feature>
<feature type="strand" evidence="10">
    <location>
        <begin position="293"/>
        <end position="295"/>
    </location>
</feature>
<feature type="strand" evidence="10">
    <location>
        <begin position="300"/>
        <end position="304"/>
    </location>
</feature>
<feature type="helix" evidence="10">
    <location>
        <begin position="305"/>
        <end position="309"/>
    </location>
</feature>
<feature type="turn" evidence="10">
    <location>
        <begin position="312"/>
        <end position="314"/>
    </location>
</feature>
<feature type="strand" evidence="10">
    <location>
        <begin position="315"/>
        <end position="317"/>
    </location>
</feature>
<feature type="helix" evidence="10">
    <location>
        <begin position="343"/>
        <end position="360"/>
    </location>
</feature>
<feature type="strand" evidence="10">
    <location>
        <begin position="365"/>
        <end position="368"/>
    </location>
</feature>
<feature type="helix" evidence="10">
    <location>
        <begin position="370"/>
        <end position="372"/>
    </location>
</feature>
<feature type="strand" evidence="10">
    <location>
        <begin position="379"/>
        <end position="381"/>
    </location>
</feature>
<feature type="strand" evidence="10">
    <location>
        <begin position="388"/>
        <end position="390"/>
    </location>
</feature>
<reference key="1">
    <citation type="submission" date="2009-09" db="EMBL/GenBank/DDBJ databases">
        <title>Polymorphism of cytochrome P450 of drug resistant form of Mycobacterium tuberculosis.</title>
        <authorList>
            <person name="Vasilevskaya A.V."/>
            <person name="Alyapkina Y.S."/>
            <person name="Usanov S.A."/>
        </authorList>
    </citation>
    <scope>NUCLEOTIDE SEQUENCE [GENOMIC DNA]</scope>
</reference>
<reference key="2">
    <citation type="journal article" date="1998" name="Nature">
        <title>Deciphering the biology of Mycobacterium tuberculosis from the complete genome sequence.</title>
        <authorList>
            <person name="Cole S.T."/>
            <person name="Brosch R."/>
            <person name="Parkhill J."/>
            <person name="Garnier T."/>
            <person name="Churcher C.M."/>
            <person name="Harris D.E."/>
            <person name="Gordon S.V."/>
            <person name="Eiglmeier K."/>
            <person name="Gas S."/>
            <person name="Barry C.E. III"/>
            <person name="Tekaia F."/>
            <person name="Badcock K."/>
            <person name="Basham D."/>
            <person name="Brown D."/>
            <person name="Chillingworth T."/>
            <person name="Connor R."/>
            <person name="Davies R.M."/>
            <person name="Devlin K."/>
            <person name="Feltwell T."/>
            <person name="Gentles S."/>
            <person name="Hamlin N."/>
            <person name="Holroyd S."/>
            <person name="Hornsby T."/>
            <person name="Jagels K."/>
            <person name="Krogh A."/>
            <person name="McLean J."/>
            <person name="Moule S."/>
            <person name="Murphy L.D."/>
            <person name="Oliver S."/>
            <person name="Osborne J."/>
            <person name="Quail M.A."/>
            <person name="Rajandream M.A."/>
            <person name="Rogers J."/>
            <person name="Rutter S."/>
            <person name="Seeger K."/>
            <person name="Skelton S."/>
            <person name="Squares S."/>
            <person name="Squares R."/>
            <person name="Sulston J.E."/>
            <person name="Taylor K."/>
            <person name="Whitehead S."/>
            <person name="Barrell B.G."/>
        </authorList>
    </citation>
    <scope>NUCLEOTIDE SEQUENCE [LARGE SCALE GENOMIC DNA]</scope>
    <source>
        <strain>ATCC 25618 / H37Rv</strain>
    </source>
</reference>
<reference key="3">
    <citation type="journal article" date="2010" name="J. Biol. Chem.">
        <title>Functional redundancy of steroid C26-monooxygenase activity in Mycobacterium tuberculosis revealed by biochemical and genetic analyses.</title>
        <authorList>
            <person name="Johnston J.B."/>
            <person name="Ouellet H."/>
            <person name="Ortiz de Montellano P.R."/>
        </authorList>
    </citation>
    <scope>FUNCTION</scope>
    <scope>CATALYTIC ACTIVITY</scope>
    <scope>BIOPHYSICOCHEMICAL PROPERTIES</scope>
    <scope>COFACTOR</scope>
    <scope>SUBSTRATE SPECIFICITY</scope>
    <scope>INDUCTION</scope>
    <scope>PATHWAY</scope>
</reference>
<reference key="4">
    <citation type="journal article" date="2011" name="Mol. Cell. Proteomics">
        <title>Proteogenomic analysis of Mycobacterium tuberculosis by high resolution mass spectrometry.</title>
        <authorList>
            <person name="Kelkar D.S."/>
            <person name="Kumar D."/>
            <person name="Kumar P."/>
            <person name="Balakrishnan L."/>
            <person name="Muthusamy B."/>
            <person name="Yadav A.K."/>
            <person name="Shrivastava P."/>
            <person name="Marimuthu A."/>
            <person name="Anand S."/>
            <person name="Sundaram H."/>
            <person name="Kingsbury R."/>
            <person name="Harsha H.C."/>
            <person name="Nair B."/>
            <person name="Prasad T.S."/>
            <person name="Chauhan D.S."/>
            <person name="Katoch K."/>
            <person name="Katoch V.M."/>
            <person name="Kumar P."/>
            <person name="Chaerkady R."/>
            <person name="Ramachandran S."/>
            <person name="Dash D."/>
            <person name="Pandey A."/>
        </authorList>
    </citation>
    <scope>IDENTIFICATION BY MASS SPECTROMETRY [LARGE SCALE ANALYSIS]</scope>
    <source>
        <strain>ATCC 25618 / H37Rv</strain>
    </source>
</reference>
<reference key="5">
    <citation type="journal article" date="2014" name="J. Biol. Chem.">
        <title>Cholesterol ester oxidation by mycobacterial cytochrome P450.</title>
        <authorList>
            <person name="Frank D.J."/>
            <person name="Madrona Y."/>
            <person name="Ortiz de Montellano P.R."/>
        </authorList>
    </citation>
    <scope>FUNCTION</scope>
    <scope>CATALYTIC ACTIVITY</scope>
    <scope>BIOPHYSICOCHEMICAL PROPERTIES</scope>
    <scope>COFACTOR</scope>
</reference>
<reference key="6">
    <citation type="journal article" date="2010" name="J. Biol. Chem.">
        <title>Structural and biochemical characterization of Mycobacterium tuberculosis CYP142: evidence for multiple cholesterol 27-hydroxylase activities in a human pathogen.</title>
        <authorList>
            <person name="Driscoll M.D."/>
            <person name="McLean K.J."/>
            <person name="Levy C."/>
            <person name="Mast N."/>
            <person name="Pikuleva I.A."/>
            <person name="Lafite P."/>
            <person name="Rigby S.E."/>
            <person name="Leys D."/>
            <person name="Munro A.W."/>
        </authorList>
    </citation>
    <scope>X-RAY CRYSTALLOGRAPHY (1.60 ANGSTROMS) IN COMPLEX WITH HEME</scope>
    <scope>FUNCTION</scope>
    <scope>CATALYTIC ACTIVITY</scope>
    <scope>BIOPHYSICOCHEMICAL PROPERTIES</scope>
    <scope>COFACTOR</scope>
    <scope>ACTIVITY REGULATION</scope>
    <scope>SUBSTRATE SPECIFICITY</scope>
</reference>
<comment type="function">
    <text evidence="1 2 3">Involved in the utilization of cholesterol as the sole carbon and energy source by degrading the side chain during infection (PubMed:20843794). Primarily catalyzes the sequential oxidation of the terminal methyl of cholest-4-en-3-one into (25R)-26-hydroxycholest-4-en-3-one (alcohol), (25R)-26-oxocholest-4-en-3-one (aldehyde), to finally yield the carboxylic acid (25R)-3-oxocholest-4-en-26-oate (PubMed:20843794, PubMed:20889498). In vitro, Cyp142 catalyzes with equal preference the oxidation of both (25R)- and (25S)-26-hydroxycholest-4-en-3-one diastereomers to the corresponding carboxylic acid which is a prerequisite for entry into the beta-oxidation pathway (PubMed:20843794). Also able to sequentially oxidize cholesterol itself, not only cholest-4-en-3-one (PubMed:20843794).</text>
</comment>
<comment type="catalytic activity">
    <reaction evidence="1 2 8">
        <text>cholest-4-en-3-one + 6 reduced [2Fe-2S]-[ferredoxin] + 3 O2 + 5 H(+) = (25R)-3-oxocholest-4-en-26-oate + 6 oxidized [2Fe-2S]-[ferredoxin] + 4 H2O</text>
        <dbReference type="Rhea" id="RHEA:49996"/>
        <dbReference type="Rhea" id="RHEA-COMP:10000"/>
        <dbReference type="Rhea" id="RHEA-COMP:10001"/>
        <dbReference type="ChEBI" id="CHEBI:15377"/>
        <dbReference type="ChEBI" id="CHEBI:15378"/>
        <dbReference type="ChEBI" id="CHEBI:15379"/>
        <dbReference type="ChEBI" id="CHEBI:16175"/>
        <dbReference type="ChEBI" id="CHEBI:33737"/>
        <dbReference type="ChEBI" id="CHEBI:33738"/>
        <dbReference type="ChEBI" id="CHEBI:71570"/>
        <dbReference type="EC" id="1.14.15.28"/>
    </reaction>
</comment>
<comment type="catalytic activity">
    <reaction evidence="1">
        <text>cholest-4-en-3-one + 2 reduced [2Fe-2S]-[ferredoxin] + O2 + 2 H(+) = (25R)-3-oxocholest-4-en-26-ol + 2 oxidized [2Fe-2S]-[ferredoxin] + H2O</text>
        <dbReference type="Rhea" id="RHEA:43912"/>
        <dbReference type="Rhea" id="RHEA-COMP:10000"/>
        <dbReference type="Rhea" id="RHEA-COMP:10001"/>
        <dbReference type="ChEBI" id="CHEBI:15377"/>
        <dbReference type="ChEBI" id="CHEBI:15378"/>
        <dbReference type="ChEBI" id="CHEBI:15379"/>
        <dbReference type="ChEBI" id="CHEBI:16175"/>
        <dbReference type="ChEBI" id="CHEBI:33737"/>
        <dbReference type="ChEBI" id="CHEBI:33738"/>
        <dbReference type="ChEBI" id="CHEBI:83861"/>
    </reaction>
    <physiologicalReaction direction="left-to-right" evidence="1">
        <dbReference type="Rhea" id="RHEA:43913"/>
    </physiologicalReaction>
</comment>
<comment type="catalytic activity">
    <reaction evidence="1">
        <text>(25R)-3-oxocholest-4-en-26-ol + 2 reduced [2Fe-2S]-[ferredoxin] + O2 + 2 H(+) = (25R)-3-oxocholest-4-en-26-al + 2 oxidized [2Fe-2S]-[ferredoxin] + 2 H2O</text>
        <dbReference type="Rhea" id="RHEA:43916"/>
        <dbReference type="Rhea" id="RHEA-COMP:10000"/>
        <dbReference type="Rhea" id="RHEA-COMP:10001"/>
        <dbReference type="ChEBI" id="CHEBI:15377"/>
        <dbReference type="ChEBI" id="CHEBI:15378"/>
        <dbReference type="ChEBI" id="CHEBI:15379"/>
        <dbReference type="ChEBI" id="CHEBI:33737"/>
        <dbReference type="ChEBI" id="CHEBI:33738"/>
        <dbReference type="ChEBI" id="CHEBI:83861"/>
        <dbReference type="ChEBI" id="CHEBI:83862"/>
    </reaction>
    <physiologicalReaction direction="left-to-right" evidence="1">
        <dbReference type="Rhea" id="RHEA:43917"/>
    </physiologicalReaction>
</comment>
<comment type="catalytic activity">
    <reaction evidence="1">
        <text>(25R)-3-oxocholest-4-en-26-al + 2 reduced [2Fe-2S]-[ferredoxin] + O2 + H(+) = (25R)-3-oxocholest-4-en-26-oate + 2 oxidized [2Fe-2S]-[ferredoxin] + H2O</text>
        <dbReference type="Rhea" id="RHEA:43920"/>
        <dbReference type="Rhea" id="RHEA-COMP:10000"/>
        <dbReference type="Rhea" id="RHEA-COMP:10001"/>
        <dbReference type="ChEBI" id="CHEBI:15377"/>
        <dbReference type="ChEBI" id="CHEBI:15378"/>
        <dbReference type="ChEBI" id="CHEBI:15379"/>
        <dbReference type="ChEBI" id="CHEBI:33737"/>
        <dbReference type="ChEBI" id="CHEBI:33738"/>
        <dbReference type="ChEBI" id="CHEBI:71570"/>
        <dbReference type="ChEBI" id="CHEBI:83862"/>
    </reaction>
    <physiologicalReaction direction="left-to-right" evidence="1">
        <dbReference type="Rhea" id="RHEA:43921"/>
    </physiologicalReaction>
</comment>
<comment type="catalytic activity">
    <reaction evidence="1">
        <text>cholesterol + NADPH + O2 + H(+) = 26-hydroxycholesterol + NADP(+) + H2O</text>
        <dbReference type="Rhea" id="RHEA:43836"/>
        <dbReference type="ChEBI" id="CHEBI:15377"/>
        <dbReference type="ChEBI" id="CHEBI:15378"/>
        <dbReference type="ChEBI" id="CHEBI:15379"/>
        <dbReference type="ChEBI" id="CHEBI:16113"/>
        <dbReference type="ChEBI" id="CHEBI:17703"/>
        <dbReference type="ChEBI" id="CHEBI:57783"/>
        <dbReference type="ChEBI" id="CHEBI:58349"/>
    </reaction>
    <physiologicalReaction direction="left-to-right" evidence="1">
        <dbReference type="Rhea" id="RHEA:43837"/>
    </physiologicalReaction>
</comment>
<comment type="catalytic activity">
    <reaction evidence="1">
        <text>26-hydroxycholesterol + 2 reduced [2Fe-2S]-[ferredoxin] + O2 + 2 H(+) = (3beta)-hydroxy-cholest-5-en-26-al + 2 oxidized [2Fe-2S]-[ferredoxin] + 2 H2O</text>
        <dbReference type="Rhea" id="RHEA:43840"/>
        <dbReference type="Rhea" id="RHEA-COMP:10000"/>
        <dbReference type="Rhea" id="RHEA-COMP:10001"/>
        <dbReference type="ChEBI" id="CHEBI:15377"/>
        <dbReference type="ChEBI" id="CHEBI:15378"/>
        <dbReference type="ChEBI" id="CHEBI:15379"/>
        <dbReference type="ChEBI" id="CHEBI:17703"/>
        <dbReference type="ChEBI" id="CHEBI:33737"/>
        <dbReference type="ChEBI" id="CHEBI:33738"/>
        <dbReference type="ChEBI" id="CHEBI:84145"/>
    </reaction>
    <physiologicalReaction direction="left-to-right" evidence="1">
        <dbReference type="Rhea" id="RHEA:43841"/>
    </physiologicalReaction>
</comment>
<comment type="catalytic activity">
    <reaction evidence="1">
        <text>(3beta)-hydroxy-cholest-5-en-26-al + NADPH + O2 = (3beta)-hydroxy-cholest-5-en-26-oate + NADP(+) + H2O</text>
        <dbReference type="Rhea" id="RHEA:43844"/>
        <dbReference type="ChEBI" id="CHEBI:15377"/>
        <dbReference type="ChEBI" id="CHEBI:15379"/>
        <dbReference type="ChEBI" id="CHEBI:57783"/>
        <dbReference type="ChEBI" id="CHEBI:58349"/>
        <dbReference type="ChEBI" id="CHEBI:84145"/>
        <dbReference type="ChEBI" id="CHEBI:84146"/>
    </reaction>
    <physiologicalReaction direction="left-to-right" evidence="1">
        <dbReference type="Rhea" id="RHEA:43845"/>
    </physiologicalReaction>
</comment>
<comment type="catalytic activity">
    <reaction evidence="1">
        <text>(25S)-3-oxocholest-4-en-26-ol + 2 reduced [2Fe-2S]-[ferredoxin] + O2 + 2 H(+) = (25S)-3-oxocholest-4-en-26-al + 2 oxidized [2Fe-2S]-[ferredoxin] + 2 H2O</text>
        <dbReference type="Rhea" id="RHEA:51568"/>
        <dbReference type="Rhea" id="RHEA-COMP:10000"/>
        <dbReference type="Rhea" id="RHEA-COMP:10001"/>
        <dbReference type="ChEBI" id="CHEBI:15377"/>
        <dbReference type="ChEBI" id="CHEBI:15378"/>
        <dbReference type="ChEBI" id="CHEBI:15379"/>
        <dbReference type="ChEBI" id="CHEBI:33737"/>
        <dbReference type="ChEBI" id="CHEBI:33738"/>
        <dbReference type="ChEBI" id="CHEBI:83860"/>
        <dbReference type="ChEBI" id="CHEBI:83863"/>
    </reaction>
    <physiologicalReaction direction="left-to-right" evidence="1">
        <dbReference type="Rhea" id="RHEA:51569"/>
    </physiologicalReaction>
</comment>
<comment type="catalytic activity">
    <reaction evidence="1">
        <text>(25S)-3-oxocholest-4-en-26-al + 2 reduced [2Fe-2S]-[ferredoxin] + O2 + H(+) = (25S)-3-oxocholest-4-en-26-oate + 2 oxidized [2Fe-2S]-[ferredoxin] + H2O</text>
        <dbReference type="Rhea" id="RHEA:51572"/>
        <dbReference type="Rhea" id="RHEA-COMP:10000"/>
        <dbReference type="Rhea" id="RHEA-COMP:10001"/>
        <dbReference type="ChEBI" id="CHEBI:15377"/>
        <dbReference type="ChEBI" id="CHEBI:15378"/>
        <dbReference type="ChEBI" id="CHEBI:15379"/>
        <dbReference type="ChEBI" id="CHEBI:33737"/>
        <dbReference type="ChEBI" id="CHEBI:33738"/>
        <dbReference type="ChEBI" id="CHEBI:71541"/>
        <dbReference type="ChEBI" id="CHEBI:83863"/>
    </reaction>
    <physiologicalReaction direction="left-to-right" evidence="1">
        <dbReference type="Rhea" id="RHEA:51573"/>
    </physiologicalReaction>
</comment>
<comment type="cofactor">
    <cofactor evidence="1 2 3">
        <name>heme</name>
        <dbReference type="ChEBI" id="CHEBI:30413"/>
    </cofactor>
</comment>
<comment type="activity regulation">
    <text evidence="2">Inhibited by econazole, clotrimazole and miconazole.</text>
</comment>
<comment type="biophysicochemical properties">
    <kinetics>
        <KM evidence="2">3.2 uM for cholest-4-en-3-one</KM>
        <KM evidence="1">7.7 uM for cholesterol</KM>
        <KM evidence="3">9.2 uM for cholesteryl sulfate</KM>
        <KM evidence="1">11.8 uM for cholest-4-en-3-one</KM>
        <text evidence="1 2">kcat is 84 min(-1) for cholest-4-en-3-one as substrate (PubMed:20843794). kcat is 16.7 min(-1) for cholesterol as substrate (PubMed:20843794). kcat is 0.0062 min(-1) for cholest-4-en-3-one as substrate (PubMed:20889498).</text>
    </kinetics>
</comment>
<comment type="pathway">
    <text evidence="7">Steroid metabolism; cholesterol degradation.</text>
</comment>
<comment type="induction">
    <text evidence="7">By cholesterol.</text>
</comment>
<comment type="similarity">
    <text evidence="6">Belongs to the cytochrome P450 family.</text>
</comment>
<evidence type="ECO:0000269" key="1">
    <source>
    </source>
</evidence>
<evidence type="ECO:0000269" key="2">
    <source>
    </source>
</evidence>
<evidence type="ECO:0000269" key="3">
    <source>
    </source>
</evidence>
<evidence type="ECO:0000303" key="4">
    <source>
    </source>
</evidence>
<evidence type="ECO:0000303" key="5">
    <source>
    </source>
</evidence>
<evidence type="ECO:0000305" key="6"/>
<evidence type="ECO:0000305" key="7">
    <source>
    </source>
</evidence>
<evidence type="ECO:0000305" key="8">
    <source>
    </source>
</evidence>
<evidence type="ECO:0007744" key="9">
    <source>
        <dbReference type="PDB" id="2XKR"/>
    </source>
</evidence>
<evidence type="ECO:0007829" key="10">
    <source>
        <dbReference type="PDB" id="7P5T"/>
    </source>
</evidence>
<evidence type="ECO:0007829" key="11">
    <source>
        <dbReference type="PDB" id="8A6W"/>
    </source>
</evidence>
<organism>
    <name type="scientific">Mycobacterium tuberculosis (strain ATCC 25618 / H37Rv)</name>
    <dbReference type="NCBI Taxonomy" id="83332"/>
    <lineage>
        <taxon>Bacteria</taxon>
        <taxon>Bacillati</taxon>
        <taxon>Actinomycetota</taxon>
        <taxon>Actinomycetes</taxon>
        <taxon>Mycobacteriales</taxon>
        <taxon>Mycobacteriaceae</taxon>
        <taxon>Mycobacterium</taxon>
        <taxon>Mycobacterium tuberculosis complex</taxon>
    </lineage>
</organism>
<dbReference type="EC" id="1.14.15.28" evidence="1 2 8"/>
<dbReference type="EMBL" id="GQ900521">
    <property type="protein sequence ID" value="ACX47920.1"/>
    <property type="molecule type" value="Genomic_DNA"/>
</dbReference>
<dbReference type="EMBL" id="AL123456">
    <property type="protein sequence ID" value="CCP46340.1"/>
    <property type="molecule type" value="Genomic_DNA"/>
</dbReference>
<dbReference type="PIR" id="H70807">
    <property type="entry name" value="H70807"/>
</dbReference>
<dbReference type="RefSeq" id="NP_218035.1">
    <property type="nucleotide sequence ID" value="NC_000962.3"/>
</dbReference>
<dbReference type="RefSeq" id="WP_003900082.1">
    <property type="nucleotide sequence ID" value="NZ_NVQJ01000014.1"/>
</dbReference>
<dbReference type="PDB" id="2XKR">
    <property type="method" value="X-ray"/>
    <property type="resolution" value="1.60 A"/>
    <property type="chains" value="A=1-398"/>
</dbReference>
<dbReference type="PDB" id="7P5T">
    <property type="method" value="X-ray"/>
    <property type="resolution" value="1.30 A"/>
    <property type="chains" value="A=2-398"/>
</dbReference>
<dbReference type="PDB" id="7QJL">
    <property type="method" value="X-ray"/>
    <property type="resolution" value="1.38 A"/>
    <property type="chains" value="A=2-398"/>
</dbReference>
<dbReference type="PDB" id="7QQ7">
    <property type="method" value="X-ray"/>
    <property type="resolution" value="1.60 A"/>
    <property type="chains" value="A=2-398"/>
</dbReference>
<dbReference type="PDB" id="8A6W">
    <property type="method" value="X-ray"/>
    <property type="resolution" value="2.09 A"/>
    <property type="chains" value="B/E=1-398"/>
</dbReference>
<dbReference type="PDB" id="8A9P">
    <property type="method" value="X-ray"/>
    <property type="resolution" value="1.63 A"/>
    <property type="chains" value="A=2-398"/>
</dbReference>
<dbReference type="PDB" id="8S53">
    <property type="method" value="X-ray"/>
    <property type="resolution" value="1.60 A"/>
    <property type="chains" value="A=1-398"/>
</dbReference>
<dbReference type="PDBsum" id="2XKR"/>
<dbReference type="PDBsum" id="7P5T"/>
<dbReference type="PDBsum" id="7QJL"/>
<dbReference type="PDBsum" id="7QQ7"/>
<dbReference type="PDBsum" id="8A6W"/>
<dbReference type="PDBsum" id="8A9P"/>
<dbReference type="PDBsum" id="8S53"/>
<dbReference type="SMR" id="P9WPL5"/>
<dbReference type="FunCoup" id="P9WPL5">
    <property type="interactions" value="22"/>
</dbReference>
<dbReference type="STRING" id="83332.Rv3518c"/>
<dbReference type="SwissLipids" id="SLP:000001011"/>
<dbReference type="PaxDb" id="83332-Rv3518c"/>
<dbReference type="DNASU" id="888282"/>
<dbReference type="GeneID" id="45427501"/>
<dbReference type="GeneID" id="888282"/>
<dbReference type="KEGG" id="mtu:Rv3518c"/>
<dbReference type="KEGG" id="mtv:RVBD_3518c"/>
<dbReference type="TubercuList" id="Rv3518c"/>
<dbReference type="eggNOG" id="COG2124">
    <property type="taxonomic scope" value="Bacteria"/>
</dbReference>
<dbReference type="InParanoid" id="P9WPL5"/>
<dbReference type="OrthoDB" id="5241086at2"/>
<dbReference type="PhylomeDB" id="P9WPL5"/>
<dbReference type="BioCyc" id="MetaCyc:G185E-7795-MONOMER"/>
<dbReference type="BRENDA" id="1.14.15.28">
    <property type="organism ID" value="3445"/>
</dbReference>
<dbReference type="UniPathway" id="UPA01058"/>
<dbReference type="EvolutionaryTrace" id="P9WPL5"/>
<dbReference type="Proteomes" id="UP000001584">
    <property type="component" value="Chromosome"/>
</dbReference>
<dbReference type="GO" id="GO:0009274">
    <property type="term" value="C:peptidoglycan-based cell wall"/>
    <property type="evidence" value="ECO:0007005"/>
    <property type="project" value="MTBBASE"/>
</dbReference>
<dbReference type="GO" id="GO:0036199">
    <property type="term" value="F:cholest-4-en-3-one 26-monooxygenase activity"/>
    <property type="evidence" value="ECO:0000314"/>
    <property type="project" value="MTBBASE"/>
</dbReference>
<dbReference type="GO" id="GO:0031073">
    <property type="term" value="F:cholesterol 26-hydroxylase activity"/>
    <property type="evidence" value="ECO:0000314"/>
    <property type="project" value="MTBBASE"/>
</dbReference>
<dbReference type="GO" id="GO:0020037">
    <property type="term" value="F:heme binding"/>
    <property type="evidence" value="ECO:0000314"/>
    <property type="project" value="MTBBASE"/>
</dbReference>
<dbReference type="GO" id="GO:0005506">
    <property type="term" value="F:iron ion binding"/>
    <property type="evidence" value="ECO:0007669"/>
    <property type="project" value="InterPro"/>
</dbReference>
<dbReference type="GO" id="GO:0008395">
    <property type="term" value="F:steroid hydroxylase activity"/>
    <property type="evidence" value="ECO:0000318"/>
    <property type="project" value="GO_Central"/>
</dbReference>
<dbReference type="GO" id="GO:0006707">
    <property type="term" value="P:cholesterol catabolic process"/>
    <property type="evidence" value="ECO:0000314"/>
    <property type="project" value="MTBBASE"/>
</dbReference>
<dbReference type="CDD" id="cd11033">
    <property type="entry name" value="CYP142-like"/>
    <property type="match status" value="1"/>
</dbReference>
<dbReference type="FunFam" id="1.10.630.10:FF:000018">
    <property type="entry name" value="Cytochrome P450 monooxygenase"/>
    <property type="match status" value="1"/>
</dbReference>
<dbReference type="Gene3D" id="1.10.630.10">
    <property type="entry name" value="Cytochrome P450"/>
    <property type="match status" value="1"/>
</dbReference>
<dbReference type="InterPro" id="IPR001128">
    <property type="entry name" value="Cyt_P450"/>
</dbReference>
<dbReference type="InterPro" id="IPR002397">
    <property type="entry name" value="Cyt_P450_B"/>
</dbReference>
<dbReference type="InterPro" id="IPR017972">
    <property type="entry name" value="Cyt_P450_CS"/>
</dbReference>
<dbReference type="InterPro" id="IPR036396">
    <property type="entry name" value="Cyt_P450_sf"/>
</dbReference>
<dbReference type="PANTHER" id="PTHR46696:SF4">
    <property type="entry name" value="BIOTIN BIOSYNTHESIS CYTOCHROME P450"/>
    <property type="match status" value="1"/>
</dbReference>
<dbReference type="PANTHER" id="PTHR46696">
    <property type="entry name" value="P450, PUTATIVE (EUROFUNG)-RELATED"/>
    <property type="match status" value="1"/>
</dbReference>
<dbReference type="Pfam" id="PF00067">
    <property type="entry name" value="p450"/>
    <property type="match status" value="1"/>
</dbReference>
<dbReference type="PRINTS" id="PR00359">
    <property type="entry name" value="BP450"/>
</dbReference>
<dbReference type="PRINTS" id="PR00385">
    <property type="entry name" value="P450"/>
</dbReference>
<dbReference type="SUPFAM" id="SSF48264">
    <property type="entry name" value="Cytochrome P450"/>
    <property type="match status" value="1"/>
</dbReference>
<dbReference type="PROSITE" id="PS00086">
    <property type="entry name" value="CYTOCHROME_P450"/>
    <property type="match status" value="1"/>
</dbReference>
<protein>
    <recommendedName>
        <fullName evidence="4">Steroid C26-monooxygenase</fullName>
        <ecNumber evidence="1 2 8">1.14.15.28</ecNumber>
    </recommendedName>
    <alternativeName>
        <fullName evidence="4">Cholest-4-en-3-one C26-monooxygenase</fullName>
    </alternativeName>
    <alternativeName>
        <fullName evidence="4">Cholest-4-en-3-one C26-monooxygenase [(25R)-3-oxocholest-4-en-26-oate forming]</fullName>
    </alternativeName>
    <alternativeName>
        <fullName evidence="4">Cholesterol C26-monooxygenase</fullName>
    </alternativeName>
    <alternativeName>
        <fullName evidence="4">Cholesterol C26-monooxygenase [(25R)-3beta-hydroxycholest-5-en-26-oate forming]</fullName>
    </alternativeName>
    <alternativeName>
        <fullName evidence="5">Cytochrome P450 142</fullName>
    </alternativeName>
    <alternativeName>
        <fullName evidence="5">Steroid C27-monooxygenase</fullName>
    </alternativeName>
</protein>
<keyword id="KW-0002">3D-structure</keyword>
<keyword id="KW-0153">Cholesterol metabolism</keyword>
<keyword id="KW-0349">Heme</keyword>
<keyword id="KW-0408">Iron</keyword>
<keyword id="KW-0442">Lipid degradation</keyword>
<keyword id="KW-0443">Lipid metabolism</keyword>
<keyword id="KW-0479">Metal-binding</keyword>
<keyword id="KW-0503">Monooxygenase</keyword>
<keyword id="KW-0521">NADP</keyword>
<keyword id="KW-0560">Oxidoreductase</keyword>
<keyword id="KW-1185">Reference proteome</keyword>
<keyword id="KW-0753">Steroid metabolism</keyword>
<keyword id="KW-1207">Sterol metabolism</keyword>
<keyword id="KW-0843">Virulence</keyword>